<protein>
    <recommendedName>
        <fullName evidence="2">Regulator of nonsense transcripts 3B</fullName>
    </recommendedName>
    <alternativeName>
        <fullName evidence="9">UPF3B regulator of nonsense mediated mRNA decay</fullName>
    </alternativeName>
    <alternativeName>
        <fullName evidence="1">Up-frameshift suppressor 3 homolog B</fullName>
    </alternativeName>
</protein>
<name>REN3B_DANRE</name>
<evidence type="ECO:0000250" key="1">
    <source>
        <dbReference type="UniProtKB" id="P48412"/>
    </source>
</evidence>
<evidence type="ECO:0000250" key="2">
    <source>
        <dbReference type="UniProtKB" id="Q9BZI7"/>
    </source>
</evidence>
<evidence type="ECO:0000256" key="3">
    <source>
        <dbReference type="SAM" id="MobiDB-lite"/>
    </source>
</evidence>
<evidence type="ECO:0000269" key="4">
    <source>
    </source>
</evidence>
<evidence type="ECO:0000305" key="5"/>
<evidence type="ECO:0000312" key="6">
    <source>
        <dbReference type="EMBL" id="AAH55632.1"/>
    </source>
</evidence>
<evidence type="ECO:0000312" key="7">
    <source>
        <dbReference type="EMBL" id="CAX18773.1"/>
    </source>
</evidence>
<evidence type="ECO:0000312" key="8">
    <source>
        <dbReference type="Proteomes" id="UP000000437"/>
    </source>
</evidence>
<evidence type="ECO:0000312" key="9">
    <source>
        <dbReference type="ZFIN" id="ZDB-GENE-040426-1630"/>
    </source>
</evidence>
<reference evidence="7" key="1">
    <citation type="journal article" date="2009" name="Mol. Cell. Biol.">
        <title>Nonsense-mediated mRNA decay effectors are essential for zebrafish embryonic development and survival.</title>
        <authorList>
            <person name="Wittkopp N."/>
            <person name="Huntzinger E."/>
            <person name="Weiler C."/>
            <person name="Sauliere J."/>
            <person name="Schmidt S."/>
            <person name="Sonawane M."/>
            <person name="Izaurralde E."/>
        </authorList>
    </citation>
    <scope>NUCLEOTIDE SEQUENCE [MRNA]</scope>
    <scope>DEVELOPMENTAL STAGE</scope>
</reference>
<reference evidence="8" key="2">
    <citation type="journal article" date="2013" name="Nature">
        <title>The zebrafish reference genome sequence and its relationship to the human genome.</title>
        <authorList>
            <person name="Howe K."/>
            <person name="Clark M.D."/>
            <person name="Torroja C.F."/>
            <person name="Torrance J."/>
            <person name="Berthelot C."/>
            <person name="Muffato M."/>
            <person name="Collins J.E."/>
            <person name="Humphray S."/>
            <person name="McLaren K."/>
            <person name="Matthews L."/>
            <person name="McLaren S."/>
            <person name="Sealy I."/>
            <person name="Caccamo M."/>
            <person name="Churcher C."/>
            <person name="Scott C."/>
            <person name="Barrett J.C."/>
            <person name="Koch R."/>
            <person name="Rauch G.J."/>
            <person name="White S."/>
            <person name="Chow W."/>
            <person name="Kilian B."/>
            <person name="Quintais L.T."/>
            <person name="Guerra-Assuncao J.A."/>
            <person name="Zhou Y."/>
            <person name="Gu Y."/>
            <person name="Yen J."/>
            <person name="Vogel J.H."/>
            <person name="Eyre T."/>
            <person name="Redmond S."/>
            <person name="Banerjee R."/>
            <person name="Chi J."/>
            <person name="Fu B."/>
            <person name="Langley E."/>
            <person name="Maguire S.F."/>
            <person name="Laird G.K."/>
            <person name="Lloyd D."/>
            <person name="Kenyon E."/>
            <person name="Donaldson S."/>
            <person name="Sehra H."/>
            <person name="Almeida-King J."/>
            <person name="Loveland J."/>
            <person name="Trevanion S."/>
            <person name="Jones M."/>
            <person name="Quail M."/>
            <person name="Willey D."/>
            <person name="Hunt A."/>
            <person name="Burton J."/>
            <person name="Sims S."/>
            <person name="McLay K."/>
            <person name="Plumb B."/>
            <person name="Davis J."/>
            <person name="Clee C."/>
            <person name="Oliver K."/>
            <person name="Clark R."/>
            <person name="Riddle C."/>
            <person name="Elliot D."/>
            <person name="Threadgold G."/>
            <person name="Harden G."/>
            <person name="Ware D."/>
            <person name="Begum S."/>
            <person name="Mortimore B."/>
            <person name="Kerry G."/>
            <person name="Heath P."/>
            <person name="Phillimore B."/>
            <person name="Tracey A."/>
            <person name="Corby N."/>
            <person name="Dunn M."/>
            <person name="Johnson C."/>
            <person name="Wood J."/>
            <person name="Clark S."/>
            <person name="Pelan S."/>
            <person name="Griffiths G."/>
            <person name="Smith M."/>
            <person name="Glithero R."/>
            <person name="Howden P."/>
            <person name="Barker N."/>
            <person name="Lloyd C."/>
            <person name="Stevens C."/>
            <person name="Harley J."/>
            <person name="Holt K."/>
            <person name="Panagiotidis G."/>
            <person name="Lovell J."/>
            <person name="Beasley H."/>
            <person name="Henderson C."/>
            <person name="Gordon D."/>
            <person name="Auger K."/>
            <person name="Wright D."/>
            <person name="Collins J."/>
            <person name="Raisen C."/>
            <person name="Dyer L."/>
            <person name="Leung K."/>
            <person name="Robertson L."/>
            <person name="Ambridge K."/>
            <person name="Leongamornlert D."/>
            <person name="McGuire S."/>
            <person name="Gilderthorp R."/>
            <person name="Griffiths C."/>
            <person name="Manthravadi D."/>
            <person name="Nichol S."/>
            <person name="Barker G."/>
            <person name="Whitehead S."/>
            <person name="Kay M."/>
            <person name="Brown J."/>
            <person name="Murnane C."/>
            <person name="Gray E."/>
            <person name="Humphries M."/>
            <person name="Sycamore N."/>
            <person name="Barker D."/>
            <person name="Saunders D."/>
            <person name="Wallis J."/>
            <person name="Babbage A."/>
            <person name="Hammond S."/>
            <person name="Mashreghi-Mohammadi M."/>
            <person name="Barr L."/>
            <person name="Martin S."/>
            <person name="Wray P."/>
            <person name="Ellington A."/>
            <person name="Matthews N."/>
            <person name="Ellwood M."/>
            <person name="Woodmansey R."/>
            <person name="Clark G."/>
            <person name="Cooper J."/>
            <person name="Tromans A."/>
            <person name="Grafham D."/>
            <person name="Skuce C."/>
            <person name="Pandian R."/>
            <person name="Andrews R."/>
            <person name="Harrison E."/>
            <person name="Kimberley A."/>
            <person name="Garnett J."/>
            <person name="Fosker N."/>
            <person name="Hall R."/>
            <person name="Garner P."/>
            <person name="Kelly D."/>
            <person name="Bird C."/>
            <person name="Palmer S."/>
            <person name="Gehring I."/>
            <person name="Berger A."/>
            <person name="Dooley C.M."/>
            <person name="Ersan-Urun Z."/>
            <person name="Eser C."/>
            <person name="Geiger H."/>
            <person name="Geisler M."/>
            <person name="Karotki L."/>
            <person name="Kirn A."/>
            <person name="Konantz J."/>
            <person name="Konantz M."/>
            <person name="Oberlander M."/>
            <person name="Rudolph-Geiger S."/>
            <person name="Teucke M."/>
            <person name="Lanz C."/>
            <person name="Raddatz G."/>
            <person name="Osoegawa K."/>
            <person name="Zhu B."/>
            <person name="Rapp A."/>
            <person name="Widaa S."/>
            <person name="Langford C."/>
            <person name="Yang F."/>
            <person name="Schuster S.C."/>
            <person name="Carter N.P."/>
            <person name="Harrow J."/>
            <person name="Ning Z."/>
            <person name="Herrero J."/>
            <person name="Searle S.M."/>
            <person name="Enright A."/>
            <person name="Geisler R."/>
            <person name="Plasterk R.H."/>
            <person name="Lee C."/>
            <person name="Westerfield M."/>
            <person name="de Jong P.J."/>
            <person name="Zon L.I."/>
            <person name="Postlethwait J.H."/>
            <person name="Nusslein-Volhard C."/>
            <person name="Hubbard T.J."/>
            <person name="Roest Crollius H."/>
            <person name="Rogers J."/>
            <person name="Stemple D.L."/>
        </authorList>
    </citation>
    <scope>NUCLEOTIDE SEQUENCE [LARGE SCALE GENOMIC DNA]</scope>
    <source>
        <strain evidence="8">Tuebingen</strain>
    </source>
</reference>
<reference evidence="6" key="3">
    <citation type="submission" date="2003-08" db="EMBL/GenBank/DDBJ databases">
        <authorList>
            <consortium name="NIH - Zebrafish Gene Collection (ZGC) project"/>
        </authorList>
    </citation>
    <scope>NUCLEOTIDE SEQUENCE [LARGE SCALE MRNA]</scope>
    <source>
        <tissue evidence="6">Embryo</tissue>
    </source>
</reference>
<proteinExistence type="evidence at transcript level"/>
<dbReference type="EMBL" id="FM986820">
    <property type="protein sequence ID" value="CAX18773.1"/>
    <property type="molecule type" value="mRNA"/>
</dbReference>
<dbReference type="EMBL" id="BX571981">
    <property type="status" value="NOT_ANNOTATED_CDS"/>
    <property type="molecule type" value="Genomic_DNA"/>
</dbReference>
<dbReference type="EMBL" id="BC055632">
    <property type="protein sequence ID" value="AAH55632.1"/>
    <property type="molecule type" value="mRNA"/>
</dbReference>
<dbReference type="RefSeq" id="NP_957248.1">
    <property type="nucleotide sequence ID" value="NM_200954.1"/>
</dbReference>
<dbReference type="SMR" id="F1QNX7"/>
<dbReference type="FunCoup" id="F1QNX7">
    <property type="interactions" value="1298"/>
</dbReference>
<dbReference type="STRING" id="7955.ENSDARP00000011948"/>
<dbReference type="PaxDb" id="7955-ENSDARP00000011948"/>
<dbReference type="Ensembl" id="ENSDART00000010019">
    <molecule id="F1QNX7-1"/>
    <property type="protein sequence ID" value="ENSDARP00000011948"/>
    <property type="gene ID" value="ENSDARG00000000489"/>
</dbReference>
<dbReference type="GeneID" id="393929"/>
<dbReference type="KEGG" id="dre:393929"/>
<dbReference type="AGR" id="ZFIN:ZDB-GENE-040426-1630"/>
<dbReference type="CTD" id="65109"/>
<dbReference type="ZFIN" id="ZDB-GENE-040426-1630">
    <property type="gene designation" value="upf3b"/>
</dbReference>
<dbReference type="eggNOG" id="KOG1295">
    <property type="taxonomic scope" value="Eukaryota"/>
</dbReference>
<dbReference type="HOGENOM" id="CLU_041202_1_0_1"/>
<dbReference type="InParanoid" id="F1QNX7"/>
<dbReference type="OMA" id="LVIYQPG"/>
<dbReference type="OrthoDB" id="18087at2759"/>
<dbReference type="TreeFam" id="TF316034"/>
<dbReference type="Reactome" id="R-DRE-72163">
    <property type="pathway name" value="mRNA Splicing - Major Pathway"/>
</dbReference>
<dbReference type="Reactome" id="R-DRE-975957">
    <property type="pathway name" value="Nonsense Mediated Decay (NMD) enhanced by the Exon Junction Complex (EJC)"/>
</dbReference>
<dbReference type="PRO" id="PR:F1QNX7"/>
<dbReference type="Proteomes" id="UP000000437">
    <property type="component" value="Alternate scaffold 14"/>
</dbReference>
<dbReference type="Proteomes" id="UP000000437">
    <property type="component" value="Chromosome 14"/>
</dbReference>
<dbReference type="Bgee" id="ENSDARG00000116719">
    <property type="expression patterns" value="Expressed in multicellular organism"/>
</dbReference>
<dbReference type="GO" id="GO:0005737">
    <property type="term" value="C:cytoplasm"/>
    <property type="evidence" value="ECO:0000318"/>
    <property type="project" value="GO_Central"/>
</dbReference>
<dbReference type="GO" id="GO:0005730">
    <property type="term" value="C:nucleolus"/>
    <property type="evidence" value="ECO:0000318"/>
    <property type="project" value="GO_Central"/>
</dbReference>
<dbReference type="GO" id="GO:0003729">
    <property type="term" value="F:mRNA binding"/>
    <property type="evidence" value="ECO:0000318"/>
    <property type="project" value="GO_Central"/>
</dbReference>
<dbReference type="GO" id="GO:0000184">
    <property type="term" value="P:nuclear-transcribed mRNA catabolic process, nonsense-mediated decay"/>
    <property type="evidence" value="ECO:0000318"/>
    <property type="project" value="GO_Central"/>
</dbReference>
<dbReference type="GO" id="GO:0045727">
    <property type="term" value="P:positive regulation of translation"/>
    <property type="evidence" value="ECO:0000318"/>
    <property type="project" value="GO_Central"/>
</dbReference>
<dbReference type="CDD" id="cd12728">
    <property type="entry name" value="RRM_like_Smg4_UPF3B"/>
    <property type="match status" value="1"/>
</dbReference>
<dbReference type="FunFam" id="3.30.70.330:FF:000067">
    <property type="entry name" value="regulator of nonsense transcripts 3A isoform X2"/>
    <property type="match status" value="1"/>
</dbReference>
<dbReference type="Gene3D" id="3.30.70.330">
    <property type="match status" value="1"/>
</dbReference>
<dbReference type="InterPro" id="IPR012677">
    <property type="entry name" value="Nucleotide-bd_a/b_plait_sf"/>
</dbReference>
<dbReference type="InterPro" id="IPR035979">
    <property type="entry name" value="RBD_domain_sf"/>
</dbReference>
<dbReference type="InterPro" id="IPR039722">
    <property type="entry name" value="Upf3"/>
</dbReference>
<dbReference type="InterPro" id="IPR005120">
    <property type="entry name" value="UPF3_dom"/>
</dbReference>
<dbReference type="InterPro" id="IPR034979">
    <property type="entry name" value="UPF3B_RRM-like"/>
</dbReference>
<dbReference type="PANTHER" id="PTHR13112:SF1">
    <property type="entry name" value="REGULATOR OF NONSENSE TRANSCRIPTS 3B"/>
    <property type="match status" value="1"/>
</dbReference>
<dbReference type="PANTHER" id="PTHR13112">
    <property type="entry name" value="UPF3 REGULATOR OF NONSENSE TRANSCRIPTS-LIKE PROTEIN"/>
    <property type="match status" value="1"/>
</dbReference>
<dbReference type="Pfam" id="PF03467">
    <property type="entry name" value="Smg4_UPF3"/>
    <property type="match status" value="1"/>
</dbReference>
<dbReference type="SUPFAM" id="SSF54928">
    <property type="entry name" value="RNA-binding domain, RBD"/>
    <property type="match status" value="1"/>
</dbReference>
<gene>
    <name evidence="9" type="primary">upf3b</name>
    <name evidence="2" type="synonym">rent3b</name>
</gene>
<sequence length="467" mass="55912">MKEDKENTRPREKKVEIKCDENDKQEKPCKEKKEAMTKIVIRRLPPTLTKEDLEEQLQPLPELDYLEFFSSDTSLFPHLFARAYLNFKNQDDIVLFRDRFDGYVFIDNRGQEYPAIVEFAPFQKVAKKRSKKKDAKSGTIDDDADYKKFLEFYNGDEEKSPSNPEILLEEIEAKTKELSSKKTTPLLDFLKNKQRIREEKKEERRRREIERKRLREEERRKWREEDRRKRKEAEKLKKVEKAFEKDKDQHKDEQPKIKLLRKPEKADDGETEKPKDKPKKQDRERQKEDRPSGGDLKKRQNGEHREEKGGKPEDVGHKEYRDRDGERERDRDRERERRQKEKERIRRQDEERRRRREHQDGENNYRKREEEGKKDKERVWEKRKNEHTGESSGSARPEKSSRDSKKEESARKDRLRNKDRPAIQLYQPGSRNRTRGGGGGGGTGGDGPAAEKRAEREAKKNQEKAAE</sequence>
<keyword id="KW-0025">Alternative splicing</keyword>
<keyword id="KW-0963">Cytoplasm</keyword>
<keyword id="KW-0488">Methylation</keyword>
<keyword id="KW-0866">Nonsense-mediated mRNA decay</keyword>
<keyword id="KW-0539">Nucleus</keyword>
<keyword id="KW-1185">Reference proteome</keyword>
<keyword id="KW-0694">RNA-binding</keyword>
<feature type="chain" id="PRO_0000454180" description="Regulator of nonsense transcripts 3B">
    <location>
        <begin position="1"/>
        <end position="467"/>
    </location>
</feature>
<feature type="region of interest" description="Disordered" evidence="3">
    <location>
        <begin position="1"/>
        <end position="30"/>
    </location>
</feature>
<feature type="region of interest" description="Disordered" evidence="3">
    <location>
        <begin position="197"/>
        <end position="467"/>
    </location>
</feature>
<feature type="compositionally biased region" description="Basic and acidic residues" evidence="3">
    <location>
        <begin position="197"/>
        <end position="389"/>
    </location>
</feature>
<feature type="compositionally biased region" description="Basic and acidic residues" evidence="3">
    <location>
        <begin position="396"/>
        <end position="421"/>
    </location>
</feature>
<feature type="compositionally biased region" description="Gly residues" evidence="3">
    <location>
        <begin position="435"/>
        <end position="447"/>
    </location>
</feature>
<feature type="compositionally biased region" description="Basic and acidic residues" evidence="3">
    <location>
        <begin position="449"/>
        <end position="467"/>
    </location>
</feature>
<feature type="splice variant" id="VSP_061248" description="In isoform 2.">
    <original>FPHLFARAYLNFKNQDDIVLFRDRFDGYVFIDNRGQEYPAIVE</original>
    <variation>RTVGNLS</variation>
    <location>
        <begin position="76"/>
        <end position="118"/>
    </location>
</feature>
<feature type="sequence conflict" description="In Ref. 1; CAX18773 and 3; AAH55632." evidence="5" ref="1 3">
    <original>F</original>
    <variation>S</variation>
    <location>
        <position position="243"/>
    </location>
</feature>
<feature type="sequence conflict" description="In Ref. 1; CAX18773 and 3; AAH55632." evidence="5" ref="1 3">
    <original>T</original>
    <variation>A</variation>
    <location>
        <position position="271"/>
    </location>
</feature>
<feature type="sequence conflict" description="In Ref. 1; CAX18773 and 3; AAH55632." evidence="5" ref="1 3">
    <original>N</original>
    <variation>T</variation>
    <location>
        <position position="364"/>
    </location>
</feature>
<feature type="sequence conflict" description="In Ref. 1; CAX18773 and 3; AAH55632." evidence="5" ref="1 3">
    <original>A</original>
    <variation>G</variation>
    <location>
        <position position="465"/>
    </location>
</feature>
<comment type="function">
    <text evidence="2">Involved in nonsense-mediated decay (NMD) of mRNAs containing premature stop codons by associating with the nuclear exon junction complex (EJC) and serving as link between the EJC core and NMD machinery. Recruits UPF2 at the cytoplasmic side of the nuclear envelope and the subsequent formation of an UPF1-UPF2-UPF3 surveillance complex (including UPF1 bound to release factors at the stalled ribosome) is believed to activate NMD. In cooperation with UPF2 stimulates both ATPase and RNA helicase activities of UPF1. Binds spliced mRNA upstream of exon-exon junctions.</text>
</comment>
<comment type="subcellular location">
    <subcellularLocation>
        <location evidence="2">Nucleus</location>
    </subcellularLocation>
    <subcellularLocation>
        <location evidence="2">Cytoplasm</location>
    </subcellularLocation>
</comment>
<comment type="alternative products">
    <event type="alternative splicing"/>
    <isoform>
        <id>F1QNX7-1</id>
        <name>1</name>
        <sequence type="displayed"/>
    </isoform>
    <isoform>
        <id>F1QNX7-2</id>
        <name>2</name>
        <sequence type="described" ref="VSP_061248"/>
    </isoform>
</comment>
<comment type="developmental stage">
    <text evidence="4">Expressed during early cleavage, gastrulation and at 1 day post-fertilization.</text>
</comment>
<comment type="similarity">
    <text evidence="2">Belongs to the RENT3 family.</text>
</comment>
<accession>F1QNX7</accession>
<accession>A0A2R8QRF9</accession>
<accession>Q7SXF0</accession>
<organism evidence="8">
    <name type="scientific">Danio rerio</name>
    <name type="common">Zebrafish</name>
    <name type="synonym">Brachydanio rerio</name>
    <dbReference type="NCBI Taxonomy" id="7955"/>
    <lineage>
        <taxon>Eukaryota</taxon>
        <taxon>Metazoa</taxon>
        <taxon>Chordata</taxon>
        <taxon>Craniata</taxon>
        <taxon>Vertebrata</taxon>
        <taxon>Euteleostomi</taxon>
        <taxon>Actinopterygii</taxon>
        <taxon>Neopterygii</taxon>
        <taxon>Teleostei</taxon>
        <taxon>Ostariophysi</taxon>
        <taxon>Cypriniformes</taxon>
        <taxon>Danionidae</taxon>
        <taxon>Danioninae</taxon>
        <taxon>Danio</taxon>
    </lineage>
</organism>